<dbReference type="EC" id="2.4.2.7" evidence="1"/>
<dbReference type="EMBL" id="AM181176">
    <property type="protein sequence ID" value="CAY51299.1"/>
    <property type="molecule type" value="Genomic_DNA"/>
</dbReference>
<dbReference type="RefSeq" id="WP_015885310.1">
    <property type="nucleotide sequence ID" value="NC_012660.1"/>
</dbReference>
<dbReference type="SMR" id="C3K148"/>
<dbReference type="STRING" id="294.SRM1_01904"/>
<dbReference type="eggNOG" id="COG0503">
    <property type="taxonomic scope" value="Bacteria"/>
</dbReference>
<dbReference type="HOGENOM" id="CLU_063339_3_0_6"/>
<dbReference type="OrthoDB" id="9803963at2"/>
<dbReference type="UniPathway" id="UPA00588">
    <property type="reaction ID" value="UER00646"/>
</dbReference>
<dbReference type="GO" id="GO:0005829">
    <property type="term" value="C:cytosol"/>
    <property type="evidence" value="ECO:0007669"/>
    <property type="project" value="TreeGrafter"/>
</dbReference>
<dbReference type="GO" id="GO:0003999">
    <property type="term" value="F:adenine phosphoribosyltransferase activity"/>
    <property type="evidence" value="ECO:0007669"/>
    <property type="project" value="UniProtKB-UniRule"/>
</dbReference>
<dbReference type="GO" id="GO:0006168">
    <property type="term" value="P:adenine salvage"/>
    <property type="evidence" value="ECO:0007669"/>
    <property type="project" value="InterPro"/>
</dbReference>
<dbReference type="GO" id="GO:0044209">
    <property type="term" value="P:AMP salvage"/>
    <property type="evidence" value="ECO:0007669"/>
    <property type="project" value="UniProtKB-UniRule"/>
</dbReference>
<dbReference type="GO" id="GO:0006166">
    <property type="term" value="P:purine ribonucleoside salvage"/>
    <property type="evidence" value="ECO:0007669"/>
    <property type="project" value="UniProtKB-KW"/>
</dbReference>
<dbReference type="CDD" id="cd06223">
    <property type="entry name" value="PRTases_typeI"/>
    <property type="match status" value="1"/>
</dbReference>
<dbReference type="FunFam" id="3.40.50.2020:FF:000021">
    <property type="entry name" value="Adenine phosphoribosyltransferase"/>
    <property type="match status" value="1"/>
</dbReference>
<dbReference type="Gene3D" id="3.40.50.2020">
    <property type="match status" value="1"/>
</dbReference>
<dbReference type="HAMAP" id="MF_00004">
    <property type="entry name" value="Aden_phosphoribosyltr"/>
    <property type="match status" value="1"/>
</dbReference>
<dbReference type="InterPro" id="IPR005764">
    <property type="entry name" value="Ade_phspho_trans"/>
</dbReference>
<dbReference type="InterPro" id="IPR050120">
    <property type="entry name" value="Adenine_PRTase"/>
</dbReference>
<dbReference type="InterPro" id="IPR000836">
    <property type="entry name" value="PRibTrfase_dom"/>
</dbReference>
<dbReference type="InterPro" id="IPR029057">
    <property type="entry name" value="PRTase-like"/>
</dbReference>
<dbReference type="NCBIfam" id="TIGR01090">
    <property type="entry name" value="apt"/>
    <property type="match status" value="1"/>
</dbReference>
<dbReference type="NCBIfam" id="NF002634">
    <property type="entry name" value="PRK02304.1-3"/>
    <property type="match status" value="1"/>
</dbReference>
<dbReference type="NCBIfam" id="NF002636">
    <property type="entry name" value="PRK02304.1-5"/>
    <property type="match status" value="1"/>
</dbReference>
<dbReference type="PANTHER" id="PTHR11776">
    <property type="entry name" value="ADENINE PHOSPHORIBOSYLTRANSFERASE"/>
    <property type="match status" value="1"/>
</dbReference>
<dbReference type="PANTHER" id="PTHR11776:SF7">
    <property type="entry name" value="PHOSPHORIBOSYLTRANSFERASE DOMAIN-CONTAINING PROTEIN"/>
    <property type="match status" value="1"/>
</dbReference>
<dbReference type="Pfam" id="PF00156">
    <property type="entry name" value="Pribosyltran"/>
    <property type="match status" value="1"/>
</dbReference>
<dbReference type="SUPFAM" id="SSF53271">
    <property type="entry name" value="PRTase-like"/>
    <property type="match status" value="1"/>
</dbReference>
<dbReference type="PROSITE" id="PS00103">
    <property type="entry name" value="PUR_PYR_PR_TRANSFER"/>
    <property type="match status" value="1"/>
</dbReference>
<reference key="1">
    <citation type="journal article" date="2009" name="Genome Biol.">
        <title>Genomic and genetic analyses of diversity and plant interactions of Pseudomonas fluorescens.</title>
        <authorList>
            <person name="Silby M.W."/>
            <person name="Cerdeno-Tarraga A.M."/>
            <person name="Vernikos G.S."/>
            <person name="Giddens S.R."/>
            <person name="Jackson R.W."/>
            <person name="Preston G.M."/>
            <person name="Zhang X.-X."/>
            <person name="Moon C.D."/>
            <person name="Gehrig S.M."/>
            <person name="Godfrey S.A.C."/>
            <person name="Knight C.G."/>
            <person name="Malone J.G."/>
            <person name="Robinson Z."/>
            <person name="Spiers A.J."/>
            <person name="Harris S."/>
            <person name="Challis G.L."/>
            <person name="Yaxley A.M."/>
            <person name="Harris D."/>
            <person name="Seeger K."/>
            <person name="Murphy L."/>
            <person name="Rutter S."/>
            <person name="Squares R."/>
            <person name="Quail M.A."/>
            <person name="Saunders E."/>
            <person name="Mavromatis K."/>
            <person name="Brettin T.S."/>
            <person name="Bentley S.D."/>
            <person name="Hothersall J."/>
            <person name="Stephens E."/>
            <person name="Thomas C.M."/>
            <person name="Parkhill J."/>
            <person name="Levy S.B."/>
            <person name="Rainey P.B."/>
            <person name="Thomson N.R."/>
        </authorList>
    </citation>
    <scope>NUCLEOTIDE SEQUENCE [LARGE SCALE GENOMIC DNA]</scope>
    <source>
        <strain>SBW25</strain>
    </source>
</reference>
<gene>
    <name evidence="1" type="primary">apt</name>
    <name type="ordered locus">PFLU_4571</name>
</gene>
<protein>
    <recommendedName>
        <fullName evidence="1">Adenine phosphoribosyltransferase</fullName>
        <shortName evidence="1">APRT</shortName>
        <ecNumber evidence="1">2.4.2.7</ecNumber>
    </recommendedName>
</protein>
<sequence>MTFDSFDIKSLIRPVIDFPKPGVIFRDITPLFQSPRALRLVADSFAQRYVEADFTHIGAMDARGFLIGSIIAYQLNKPLILFRKQGKLPADVLAEGYQTEYGEAFLEVHADSLCEGDSVLMFDDLIATGGTLIAAANLVRRMGAKIFEAAAIIDLPELGGSQRLEEMGIPTFCLTQFALTER</sequence>
<proteinExistence type="inferred from homology"/>
<evidence type="ECO:0000255" key="1">
    <source>
        <dbReference type="HAMAP-Rule" id="MF_00004"/>
    </source>
</evidence>
<feature type="chain" id="PRO_1000201672" description="Adenine phosphoribosyltransferase">
    <location>
        <begin position="1"/>
        <end position="182"/>
    </location>
</feature>
<accession>C3K148</accession>
<keyword id="KW-0963">Cytoplasm</keyword>
<keyword id="KW-0328">Glycosyltransferase</keyword>
<keyword id="KW-0660">Purine salvage</keyword>
<keyword id="KW-0808">Transferase</keyword>
<comment type="function">
    <text evidence="1">Catalyzes a salvage reaction resulting in the formation of AMP, that is energically less costly than de novo synthesis.</text>
</comment>
<comment type="catalytic activity">
    <reaction evidence="1">
        <text>AMP + diphosphate = 5-phospho-alpha-D-ribose 1-diphosphate + adenine</text>
        <dbReference type="Rhea" id="RHEA:16609"/>
        <dbReference type="ChEBI" id="CHEBI:16708"/>
        <dbReference type="ChEBI" id="CHEBI:33019"/>
        <dbReference type="ChEBI" id="CHEBI:58017"/>
        <dbReference type="ChEBI" id="CHEBI:456215"/>
        <dbReference type="EC" id="2.4.2.7"/>
    </reaction>
</comment>
<comment type="pathway">
    <text evidence="1">Purine metabolism; AMP biosynthesis via salvage pathway; AMP from adenine: step 1/1.</text>
</comment>
<comment type="subunit">
    <text evidence="1">Homodimer.</text>
</comment>
<comment type="subcellular location">
    <subcellularLocation>
        <location evidence="1">Cytoplasm</location>
    </subcellularLocation>
</comment>
<comment type="similarity">
    <text evidence="1">Belongs to the purine/pyrimidine phosphoribosyltransferase family.</text>
</comment>
<organism>
    <name type="scientific">Pseudomonas fluorescens (strain SBW25)</name>
    <dbReference type="NCBI Taxonomy" id="216595"/>
    <lineage>
        <taxon>Bacteria</taxon>
        <taxon>Pseudomonadati</taxon>
        <taxon>Pseudomonadota</taxon>
        <taxon>Gammaproteobacteria</taxon>
        <taxon>Pseudomonadales</taxon>
        <taxon>Pseudomonadaceae</taxon>
        <taxon>Pseudomonas</taxon>
    </lineage>
</organism>
<name>APT_PSEFS</name>